<sequence>MATIYYDKDANLDLLKKRKVAIIGYGSQGHAHALNLRDSGVDVRVGLAAGSKSKAKAEGAGLRVLSVAEASKEADVIMVLIPDQTQKKVYDEEIAPHLSKGKALLFAHGFNIHFVQVRPPPDVDVLLVAPKGPGHMVRRQYQDGRGIPGLVAVHQDATGQAKAVGLAYARGIGCTRAGVLETTFKEETETDLFGEQAVLCGGAAALVKNGFEVLVEAGYQPESAYFECLHELKLIVDLMYEGGLAWMRHSISDTAEYGDYTRGPRVVDGRSKDEMRKILKEIQGGHFAKEFILENQAGGPTMARYRAAEAAHPIEEVGKRLRDMMSWIREAKKDSSDPGSR</sequence>
<comment type="function">
    <text evidence="1">Involved in the biosynthesis of branched-chain amino acids (BCAA). Catalyzes an alkyl-migration followed by a ketol-acid reduction of (S)-2-acetolactate (S2AL) to yield (R)-2,3-dihydroxy-isovalerate. In the isomerase reaction, S2AL is rearranged via a Mg-dependent methyl migration to produce 3-hydroxy-3-methyl-2-ketobutyrate (HMKB). In the reductase reaction, this 2-ketoacid undergoes a metal-dependent reduction by NADPH to yield (R)-2,3-dihydroxy-isovalerate.</text>
</comment>
<comment type="catalytic activity">
    <reaction evidence="1">
        <text>(2R)-2,3-dihydroxy-3-methylbutanoate + NADP(+) = (2S)-2-acetolactate + NADPH + H(+)</text>
        <dbReference type="Rhea" id="RHEA:22068"/>
        <dbReference type="ChEBI" id="CHEBI:15378"/>
        <dbReference type="ChEBI" id="CHEBI:49072"/>
        <dbReference type="ChEBI" id="CHEBI:57783"/>
        <dbReference type="ChEBI" id="CHEBI:58349"/>
        <dbReference type="ChEBI" id="CHEBI:58476"/>
        <dbReference type="EC" id="1.1.1.86"/>
    </reaction>
</comment>
<comment type="catalytic activity">
    <reaction evidence="1">
        <text>(2R,3R)-2,3-dihydroxy-3-methylpentanoate + NADP(+) = (S)-2-ethyl-2-hydroxy-3-oxobutanoate + NADPH + H(+)</text>
        <dbReference type="Rhea" id="RHEA:13493"/>
        <dbReference type="ChEBI" id="CHEBI:15378"/>
        <dbReference type="ChEBI" id="CHEBI:49256"/>
        <dbReference type="ChEBI" id="CHEBI:49258"/>
        <dbReference type="ChEBI" id="CHEBI:57783"/>
        <dbReference type="ChEBI" id="CHEBI:58349"/>
        <dbReference type="EC" id="1.1.1.86"/>
    </reaction>
</comment>
<comment type="cofactor">
    <cofactor evidence="1">
        <name>Mg(2+)</name>
        <dbReference type="ChEBI" id="CHEBI:18420"/>
    </cofactor>
    <text evidence="1">Binds 2 magnesium ions per subunit.</text>
</comment>
<comment type="pathway">
    <text evidence="1">Amino-acid biosynthesis; L-isoleucine biosynthesis; L-isoleucine from 2-oxobutanoate: step 2/4.</text>
</comment>
<comment type="pathway">
    <text evidence="1">Amino-acid biosynthesis; L-valine biosynthesis; L-valine from pyruvate: step 2/4.</text>
</comment>
<comment type="similarity">
    <text evidence="1">Belongs to the ketol-acid reductoisomerase family.</text>
</comment>
<organism>
    <name type="scientific">Anaeromyxobacter dehalogenans (strain 2CP-C)</name>
    <dbReference type="NCBI Taxonomy" id="290397"/>
    <lineage>
        <taxon>Bacteria</taxon>
        <taxon>Pseudomonadati</taxon>
        <taxon>Myxococcota</taxon>
        <taxon>Myxococcia</taxon>
        <taxon>Myxococcales</taxon>
        <taxon>Cystobacterineae</taxon>
        <taxon>Anaeromyxobacteraceae</taxon>
        <taxon>Anaeromyxobacter</taxon>
    </lineage>
</organism>
<proteinExistence type="inferred from homology"/>
<gene>
    <name evidence="1" type="primary">ilvC</name>
    <name type="ordered locus">Adeh_1976</name>
</gene>
<name>ILVC_ANADE</name>
<feature type="chain" id="PRO_0000252750" description="Ketol-acid reductoisomerase (NADP(+))">
    <location>
        <begin position="1"/>
        <end position="341"/>
    </location>
</feature>
<feature type="domain" description="KARI N-terminal Rossmann" evidence="2">
    <location>
        <begin position="1"/>
        <end position="182"/>
    </location>
</feature>
<feature type="domain" description="KARI C-terminal knotted" evidence="3">
    <location>
        <begin position="183"/>
        <end position="328"/>
    </location>
</feature>
<feature type="active site" evidence="1">
    <location>
        <position position="108"/>
    </location>
</feature>
<feature type="binding site" evidence="1">
    <location>
        <begin position="25"/>
        <end position="28"/>
    </location>
    <ligand>
        <name>NADP(+)</name>
        <dbReference type="ChEBI" id="CHEBI:58349"/>
    </ligand>
</feature>
<feature type="binding site" evidence="1">
    <location>
        <position position="51"/>
    </location>
    <ligand>
        <name>NADP(+)</name>
        <dbReference type="ChEBI" id="CHEBI:58349"/>
    </ligand>
</feature>
<feature type="binding site" evidence="1">
    <location>
        <position position="53"/>
    </location>
    <ligand>
        <name>NADP(+)</name>
        <dbReference type="ChEBI" id="CHEBI:58349"/>
    </ligand>
</feature>
<feature type="binding site" evidence="1">
    <location>
        <begin position="83"/>
        <end position="86"/>
    </location>
    <ligand>
        <name>NADP(+)</name>
        <dbReference type="ChEBI" id="CHEBI:58349"/>
    </ligand>
</feature>
<feature type="binding site" evidence="1">
    <location>
        <position position="134"/>
    </location>
    <ligand>
        <name>NADP(+)</name>
        <dbReference type="ChEBI" id="CHEBI:58349"/>
    </ligand>
</feature>
<feature type="binding site" evidence="1">
    <location>
        <position position="191"/>
    </location>
    <ligand>
        <name>Mg(2+)</name>
        <dbReference type="ChEBI" id="CHEBI:18420"/>
        <label>1</label>
    </ligand>
</feature>
<feature type="binding site" evidence="1">
    <location>
        <position position="191"/>
    </location>
    <ligand>
        <name>Mg(2+)</name>
        <dbReference type="ChEBI" id="CHEBI:18420"/>
        <label>2</label>
    </ligand>
</feature>
<feature type="binding site" evidence="1">
    <location>
        <position position="195"/>
    </location>
    <ligand>
        <name>Mg(2+)</name>
        <dbReference type="ChEBI" id="CHEBI:18420"/>
        <label>1</label>
    </ligand>
</feature>
<feature type="binding site" evidence="1">
    <location>
        <position position="227"/>
    </location>
    <ligand>
        <name>Mg(2+)</name>
        <dbReference type="ChEBI" id="CHEBI:18420"/>
        <label>2</label>
    </ligand>
</feature>
<feature type="binding site" evidence="1">
    <location>
        <position position="231"/>
    </location>
    <ligand>
        <name>Mg(2+)</name>
        <dbReference type="ChEBI" id="CHEBI:18420"/>
        <label>2</label>
    </ligand>
</feature>
<feature type="binding site" evidence="1">
    <location>
        <position position="252"/>
    </location>
    <ligand>
        <name>substrate</name>
    </ligand>
</feature>
<evidence type="ECO:0000255" key="1">
    <source>
        <dbReference type="HAMAP-Rule" id="MF_00435"/>
    </source>
</evidence>
<evidence type="ECO:0000255" key="2">
    <source>
        <dbReference type="PROSITE-ProRule" id="PRU01197"/>
    </source>
</evidence>
<evidence type="ECO:0000255" key="3">
    <source>
        <dbReference type="PROSITE-ProRule" id="PRU01198"/>
    </source>
</evidence>
<accession>Q2IJB7</accession>
<protein>
    <recommendedName>
        <fullName evidence="1">Ketol-acid reductoisomerase (NADP(+))</fullName>
        <shortName evidence="1">KARI</shortName>
        <ecNumber evidence="1">1.1.1.86</ecNumber>
    </recommendedName>
    <alternativeName>
        <fullName evidence="1">Acetohydroxy-acid isomeroreductase</fullName>
        <shortName evidence="1">AHIR</shortName>
    </alternativeName>
    <alternativeName>
        <fullName evidence="1">Alpha-keto-beta-hydroxylacyl reductoisomerase</fullName>
    </alternativeName>
    <alternativeName>
        <fullName evidence="1">Ketol-acid reductoisomerase type 1</fullName>
    </alternativeName>
    <alternativeName>
        <fullName evidence="1">Ketol-acid reductoisomerase type I</fullName>
    </alternativeName>
</protein>
<reference key="1">
    <citation type="submission" date="2006-01" db="EMBL/GenBank/DDBJ databases">
        <title>Complete sequence of Anaeromyxobacter dehalogenans 2CP-C.</title>
        <authorList>
            <person name="Copeland A."/>
            <person name="Lucas S."/>
            <person name="Lapidus A."/>
            <person name="Barry K."/>
            <person name="Detter J.C."/>
            <person name="Glavina T."/>
            <person name="Hammon N."/>
            <person name="Israni S."/>
            <person name="Pitluck S."/>
            <person name="Brettin T."/>
            <person name="Bruce D."/>
            <person name="Han C."/>
            <person name="Tapia R."/>
            <person name="Gilna P."/>
            <person name="Kiss H."/>
            <person name="Schmutz J."/>
            <person name="Larimer F."/>
            <person name="Land M."/>
            <person name="Kyrpides N."/>
            <person name="Anderson I."/>
            <person name="Sanford R.A."/>
            <person name="Ritalahti K.M."/>
            <person name="Thomas H.S."/>
            <person name="Kirby J.R."/>
            <person name="Zhulin I.B."/>
            <person name="Loeffler F.E."/>
            <person name="Richardson P."/>
        </authorList>
    </citation>
    <scope>NUCLEOTIDE SEQUENCE [LARGE SCALE GENOMIC DNA]</scope>
    <source>
        <strain>2CP-C</strain>
    </source>
</reference>
<dbReference type="EC" id="1.1.1.86" evidence="1"/>
<dbReference type="EMBL" id="CP000251">
    <property type="protein sequence ID" value="ABC81747.1"/>
    <property type="molecule type" value="Genomic_DNA"/>
</dbReference>
<dbReference type="RefSeq" id="WP_011421029.1">
    <property type="nucleotide sequence ID" value="NC_007760.1"/>
</dbReference>
<dbReference type="SMR" id="Q2IJB7"/>
<dbReference type="STRING" id="290397.Adeh_1976"/>
<dbReference type="KEGG" id="ade:Adeh_1976"/>
<dbReference type="eggNOG" id="COG0059">
    <property type="taxonomic scope" value="Bacteria"/>
</dbReference>
<dbReference type="HOGENOM" id="CLU_033821_0_1_7"/>
<dbReference type="OrthoDB" id="9804088at2"/>
<dbReference type="UniPathway" id="UPA00047">
    <property type="reaction ID" value="UER00056"/>
</dbReference>
<dbReference type="UniPathway" id="UPA00049">
    <property type="reaction ID" value="UER00060"/>
</dbReference>
<dbReference type="Proteomes" id="UP000001935">
    <property type="component" value="Chromosome"/>
</dbReference>
<dbReference type="GO" id="GO:0005829">
    <property type="term" value="C:cytosol"/>
    <property type="evidence" value="ECO:0007669"/>
    <property type="project" value="TreeGrafter"/>
</dbReference>
<dbReference type="GO" id="GO:0004455">
    <property type="term" value="F:ketol-acid reductoisomerase activity"/>
    <property type="evidence" value="ECO:0007669"/>
    <property type="project" value="UniProtKB-UniRule"/>
</dbReference>
<dbReference type="GO" id="GO:0000287">
    <property type="term" value="F:magnesium ion binding"/>
    <property type="evidence" value="ECO:0007669"/>
    <property type="project" value="UniProtKB-UniRule"/>
</dbReference>
<dbReference type="GO" id="GO:0050661">
    <property type="term" value="F:NADP binding"/>
    <property type="evidence" value="ECO:0007669"/>
    <property type="project" value="InterPro"/>
</dbReference>
<dbReference type="GO" id="GO:0009097">
    <property type="term" value="P:isoleucine biosynthetic process"/>
    <property type="evidence" value="ECO:0007669"/>
    <property type="project" value="UniProtKB-UniRule"/>
</dbReference>
<dbReference type="GO" id="GO:0009099">
    <property type="term" value="P:L-valine biosynthetic process"/>
    <property type="evidence" value="ECO:0007669"/>
    <property type="project" value="UniProtKB-UniRule"/>
</dbReference>
<dbReference type="CDD" id="cd00761">
    <property type="entry name" value="Glyco_tranf_GTA_type"/>
    <property type="match status" value="1"/>
</dbReference>
<dbReference type="FunFam" id="3.40.50.720:FF:000023">
    <property type="entry name" value="Ketol-acid reductoisomerase (NADP(+))"/>
    <property type="match status" value="1"/>
</dbReference>
<dbReference type="Gene3D" id="6.10.240.10">
    <property type="match status" value="1"/>
</dbReference>
<dbReference type="Gene3D" id="3.40.50.720">
    <property type="entry name" value="NAD(P)-binding Rossmann-like Domain"/>
    <property type="match status" value="1"/>
</dbReference>
<dbReference type="HAMAP" id="MF_00435">
    <property type="entry name" value="IlvC"/>
    <property type="match status" value="1"/>
</dbReference>
<dbReference type="InterPro" id="IPR008927">
    <property type="entry name" value="6-PGluconate_DH-like_C_sf"/>
</dbReference>
<dbReference type="InterPro" id="IPR013023">
    <property type="entry name" value="KARI"/>
</dbReference>
<dbReference type="InterPro" id="IPR000506">
    <property type="entry name" value="KARI_C"/>
</dbReference>
<dbReference type="InterPro" id="IPR013116">
    <property type="entry name" value="KARI_N"/>
</dbReference>
<dbReference type="InterPro" id="IPR014359">
    <property type="entry name" value="KARI_prok"/>
</dbReference>
<dbReference type="InterPro" id="IPR036291">
    <property type="entry name" value="NAD(P)-bd_dom_sf"/>
</dbReference>
<dbReference type="NCBIfam" id="TIGR00465">
    <property type="entry name" value="ilvC"/>
    <property type="match status" value="1"/>
</dbReference>
<dbReference type="NCBIfam" id="NF004017">
    <property type="entry name" value="PRK05479.1"/>
    <property type="match status" value="1"/>
</dbReference>
<dbReference type="NCBIfam" id="NF009940">
    <property type="entry name" value="PRK13403.1"/>
    <property type="match status" value="1"/>
</dbReference>
<dbReference type="PANTHER" id="PTHR21371">
    <property type="entry name" value="KETOL-ACID REDUCTOISOMERASE, MITOCHONDRIAL"/>
    <property type="match status" value="1"/>
</dbReference>
<dbReference type="PANTHER" id="PTHR21371:SF1">
    <property type="entry name" value="KETOL-ACID REDUCTOISOMERASE, MITOCHONDRIAL"/>
    <property type="match status" value="1"/>
</dbReference>
<dbReference type="Pfam" id="PF01450">
    <property type="entry name" value="KARI_C"/>
    <property type="match status" value="1"/>
</dbReference>
<dbReference type="Pfam" id="PF07991">
    <property type="entry name" value="KARI_N"/>
    <property type="match status" value="1"/>
</dbReference>
<dbReference type="PIRSF" id="PIRSF000116">
    <property type="entry name" value="IlvC_gammaproteo"/>
    <property type="match status" value="1"/>
</dbReference>
<dbReference type="SUPFAM" id="SSF48179">
    <property type="entry name" value="6-phosphogluconate dehydrogenase C-terminal domain-like"/>
    <property type="match status" value="1"/>
</dbReference>
<dbReference type="SUPFAM" id="SSF51735">
    <property type="entry name" value="NAD(P)-binding Rossmann-fold domains"/>
    <property type="match status" value="1"/>
</dbReference>
<dbReference type="PROSITE" id="PS51851">
    <property type="entry name" value="KARI_C"/>
    <property type="match status" value="1"/>
</dbReference>
<dbReference type="PROSITE" id="PS51850">
    <property type="entry name" value="KARI_N"/>
    <property type="match status" value="1"/>
</dbReference>
<keyword id="KW-0028">Amino-acid biosynthesis</keyword>
<keyword id="KW-0100">Branched-chain amino acid biosynthesis</keyword>
<keyword id="KW-0460">Magnesium</keyword>
<keyword id="KW-0479">Metal-binding</keyword>
<keyword id="KW-0521">NADP</keyword>
<keyword id="KW-0560">Oxidoreductase</keyword>
<keyword id="KW-1185">Reference proteome</keyword>